<comment type="function">
    <text evidence="1">ATPase required for the post-translational delivery of tail-anchored (TA) proteins to the endoplasmic reticulum. Recognizes and selectively binds the transmembrane domain of TA proteins in the cytosol. This complex then targets to the endoplasmic reticulum by membrane-bound receptors, where the tail-anchored protein is released for insertion. This process is regulated by ATP binding and hydrolysis. ATP binding drives the homodimer towards the closed dimer state, facilitating recognition of newly synthesized TA membrane proteins. ATP hydrolysis is required for insertion. Subsequently, the homodimer reverts towards the open dimer state, lowering its affinity for the membrane-bound receptor, and returning it to the cytosol to initiate a new round of targeting.</text>
</comment>
<comment type="subunit">
    <text evidence="1">Homodimer.</text>
</comment>
<comment type="subcellular location">
    <subcellularLocation>
        <location evidence="1">Cytoplasm</location>
    </subcellularLocation>
    <subcellularLocation>
        <location evidence="1">Endoplasmic reticulum</location>
    </subcellularLocation>
</comment>
<comment type="similarity">
    <text evidence="1">Belongs to the arsA ATPase family.</text>
</comment>
<dbReference type="EC" id="3.6.-.-" evidence="1"/>
<dbReference type="EMBL" id="AAEY01000052">
    <property type="protein sequence ID" value="EAL18069.1"/>
    <property type="molecule type" value="Genomic_DNA"/>
</dbReference>
<dbReference type="RefSeq" id="XP_772716.1">
    <property type="nucleotide sequence ID" value="XM_767623.1"/>
</dbReference>
<dbReference type="SMR" id="P0CM25"/>
<dbReference type="EnsemblFungi" id="AAW46346">
    <property type="protein sequence ID" value="AAW46346"/>
    <property type="gene ID" value="CNK02640"/>
</dbReference>
<dbReference type="GeneID" id="4938786"/>
<dbReference type="KEGG" id="cnb:CNBK0900"/>
<dbReference type="VEuPathDB" id="FungiDB:CNBK0900"/>
<dbReference type="HOGENOM" id="CLU_040761_0_0_1"/>
<dbReference type="OrthoDB" id="4081at5206"/>
<dbReference type="GO" id="GO:0043529">
    <property type="term" value="C:GET complex"/>
    <property type="evidence" value="ECO:0007669"/>
    <property type="project" value="TreeGrafter"/>
</dbReference>
<dbReference type="GO" id="GO:0005524">
    <property type="term" value="F:ATP binding"/>
    <property type="evidence" value="ECO:0007669"/>
    <property type="project" value="UniProtKB-UniRule"/>
</dbReference>
<dbReference type="GO" id="GO:0016887">
    <property type="term" value="F:ATP hydrolysis activity"/>
    <property type="evidence" value="ECO:0007669"/>
    <property type="project" value="InterPro"/>
</dbReference>
<dbReference type="GO" id="GO:0046872">
    <property type="term" value="F:metal ion binding"/>
    <property type="evidence" value="ECO:0007669"/>
    <property type="project" value="UniProtKB-KW"/>
</dbReference>
<dbReference type="GO" id="GO:0071816">
    <property type="term" value="P:tail-anchored membrane protein insertion into ER membrane"/>
    <property type="evidence" value="ECO:0007669"/>
    <property type="project" value="TreeGrafter"/>
</dbReference>
<dbReference type="CDD" id="cd02035">
    <property type="entry name" value="ArsA"/>
    <property type="match status" value="1"/>
</dbReference>
<dbReference type="FunFam" id="3.40.50.300:FF:000235">
    <property type="entry name" value="ATPase ASNA1"/>
    <property type="match status" value="1"/>
</dbReference>
<dbReference type="Gene3D" id="3.40.50.300">
    <property type="entry name" value="P-loop containing nucleotide triphosphate hydrolases"/>
    <property type="match status" value="1"/>
</dbReference>
<dbReference type="HAMAP" id="MF_03112">
    <property type="entry name" value="Asna1_Get3"/>
    <property type="match status" value="1"/>
</dbReference>
<dbReference type="InterPro" id="IPR025723">
    <property type="entry name" value="Anion-transp_ATPase-like_dom"/>
</dbReference>
<dbReference type="InterPro" id="IPR016300">
    <property type="entry name" value="ATPase_ArsA/GET3"/>
</dbReference>
<dbReference type="InterPro" id="IPR027542">
    <property type="entry name" value="ATPase_ArsA/GET3_euk"/>
</dbReference>
<dbReference type="InterPro" id="IPR027417">
    <property type="entry name" value="P-loop_NTPase"/>
</dbReference>
<dbReference type="NCBIfam" id="TIGR00345">
    <property type="entry name" value="GET3_arsA_TRC40"/>
    <property type="match status" value="1"/>
</dbReference>
<dbReference type="PANTHER" id="PTHR10803">
    <property type="entry name" value="ARSENICAL PUMP-DRIVING ATPASE ARSENITE-TRANSLOCATING ATPASE"/>
    <property type="match status" value="1"/>
</dbReference>
<dbReference type="PANTHER" id="PTHR10803:SF3">
    <property type="entry name" value="ATPASE GET3"/>
    <property type="match status" value="1"/>
</dbReference>
<dbReference type="Pfam" id="PF02374">
    <property type="entry name" value="ArsA_ATPase"/>
    <property type="match status" value="1"/>
</dbReference>
<dbReference type="SUPFAM" id="SSF52540">
    <property type="entry name" value="P-loop containing nucleoside triphosphate hydrolases"/>
    <property type="match status" value="1"/>
</dbReference>
<proteinExistence type="inferred from homology"/>
<feature type="chain" id="PRO_0000410014" description="ATPase GET3">
    <location>
        <begin position="1"/>
        <end position="325"/>
    </location>
</feature>
<feature type="active site" evidence="1">
    <location>
        <position position="57"/>
    </location>
</feature>
<feature type="binding site" evidence="1">
    <location>
        <begin position="28"/>
        <end position="35"/>
    </location>
    <ligand>
        <name>ATP</name>
        <dbReference type="ChEBI" id="CHEBI:30616"/>
    </ligand>
</feature>
<feature type="binding site" evidence="1">
    <location>
        <position position="229"/>
    </location>
    <ligand>
        <name>ATP</name>
        <dbReference type="ChEBI" id="CHEBI:30616"/>
    </ligand>
</feature>
<feature type="binding site" evidence="1">
    <location>
        <position position="256"/>
    </location>
    <ligand>
        <name>ATP</name>
        <dbReference type="ChEBI" id="CHEBI:30616"/>
    </ligand>
</feature>
<feature type="binding site" evidence="1">
    <location>
        <position position="267"/>
    </location>
    <ligand>
        <name>Zn(2+)</name>
        <dbReference type="ChEBI" id="CHEBI:29105"/>
        <note>ligand shared between dimeric partners</note>
    </ligand>
</feature>
<feature type="binding site" evidence="1">
    <location>
        <position position="270"/>
    </location>
    <ligand>
        <name>Zn(2+)</name>
        <dbReference type="ChEBI" id="CHEBI:29105"/>
        <note>ligand shared between dimeric partners</note>
    </ligand>
</feature>
<accession>P0CM25</accession>
<accession>Q55K96</accession>
<accession>Q5K9A4</accession>
<organism>
    <name type="scientific">Cryptococcus neoformans var. neoformans serotype D (strain B-3501A)</name>
    <name type="common">Filobasidiella neoformans</name>
    <dbReference type="NCBI Taxonomy" id="283643"/>
    <lineage>
        <taxon>Eukaryota</taxon>
        <taxon>Fungi</taxon>
        <taxon>Dikarya</taxon>
        <taxon>Basidiomycota</taxon>
        <taxon>Agaricomycotina</taxon>
        <taxon>Tremellomycetes</taxon>
        <taxon>Tremellales</taxon>
        <taxon>Cryptococcaceae</taxon>
        <taxon>Cryptococcus</taxon>
        <taxon>Cryptococcus neoformans species complex</taxon>
    </lineage>
</organism>
<evidence type="ECO:0000255" key="1">
    <source>
        <dbReference type="HAMAP-Rule" id="MF_03112"/>
    </source>
</evidence>
<sequence>MSDLEPLDPTLQNILDQKSLKWIFCGGKGGVGKTTTSCSLAVQLAACRESVLLISTDPAHNLSDAFSQKFGKDATKVNGFDNLYAMEIDPNGSLQEMIESSDQTGGMGGMMQDLAFAIPGVDEAMGFAEIMKHVKSMEFSVIVFDTAPTGHTLRFLSFPSVLEKALGKLSTLGGKFGPMIQQMQSMFGGGAPQEDMFAKLESMREIITEVNNQFKDPEKTTFVCVCISEFLSLYETERLIQELTSYEIDTHNIVVNQLLFPKAGDNCEQCSVRHNMQQKYLKEAYDLYEDEFHIVKLPLLTEEVRGVEKIKEFSKMLTQPYTPPQ</sequence>
<name>GET3_CRYNB</name>
<gene>
    <name evidence="1" type="primary">GET3</name>
    <name type="ordered locus">CNBK0900</name>
</gene>
<reference key="1">
    <citation type="journal article" date="2005" name="Science">
        <title>The genome of the basidiomycetous yeast and human pathogen Cryptococcus neoformans.</title>
        <authorList>
            <person name="Loftus B.J."/>
            <person name="Fung E."/>
            <person name="Roncaglia P."/>
            <person name="Rowley D."/>
            <person name="Amedeo P."/>
            <person name="Bruno D."/>
            <person name="Vamathevan J."/>
            <person name="Miranda M."/>
            <person name="Anderson I.J."/>
            <person name="Fraser J.A."/>
            <person name="Allen J.E."/>
            <person name="Bosdet I.E."/>
            <person name="Brent M.R."/>
            <person name="Chiu R."/>
            <person name="Doering T.L."/>
            <person name="Donlin M.J."/>
            <person name="D'Souza C.A."/>
            <person name="Fox D.S."/>
            <person name="Grinberg V."/>
            <person name="Fu J."/>
            <person name="Fukushima M."/>
            <person name="Haas B.J."/>
            <person name="Huang J.C."/>
            <person name="Janbon G."/>
            <person name="Jones S.J.M."/>
            <person name="Koo H.L."/>
            <person name="Krzywinski M.I."/>
            <person name="Kwon-Chung K.J."/>
            <person name="Lengeler K.B."/>
            <person name="Maiti R."/>
            <person name="Marra M.A."/>
            <person name="Marra R.E."/>
            <person name="Mathewson C.A."/>
            <person name="Mitchell T.G."/>
            <person name="Pertea M."/>
            <person name="Riggs F.R."/>
            <person name="Salzberg S.L."/>
            <person name="Schein J.E."/>
            <person name="Shvartsbeyn A."/>
            <person name="Shin H."/>
            <person name="Shumway M."/>
            <person name="Specht C.A."/>
            <person name="Suh B.B."/>
            <person name="Tenney A."/>
            <person name="Utterback T.R."/>
            <person name="Wickes B.L."/>
            <person name="Wortman J.R."/>
            <person name="Wye N.H."/>
            <person name="Kronstad J.W."/>
            <person name="Lodge J.K."/>
            <person name="Heitman J."/>
            <person name="Davis R.W."/>
            <person name="Fraser C.M."/>
            <person name="Hyman R.W."/>
        </authorList>
    </citation>
    <scope>NUCLEOTIDE SEQUENCE [LARGE SCALE GENOMIC DNA]</scope>
    <source>
        <strain>B-3501A</strain>
    </source>
</reference>
<keyword id="KW-0067">ATP-binding</keyword>
<keyword id="KW-0963">Cytoplasm</keyword>
<keyword id="KW-0256">Endoplasmic reticulum</keyword>
<keyword id="KW-0378">Hydrolase</keyword>
<keyword id="KW-0479">Metal-binding</keyword>
<keyword id="KW-0547">Nucleotide-binding</keyword>
<keyword id="KW-0813">Transport</keyword>
<keyword id="KW-0862">Zinc</keyword>
<protein>
    <recommendedName>
        <fullName evidence="1">ATPase GET3</fullName>
        <ecNumber evidence="1">3.6.-.-</ecNumber>
    </recommendedName>
    <alternativeName>
        <fullName evidence="1">Arsenical pump-driving ATPase</fullName>
    </alternativeName>
    <alternativeName>
        <fullName evidence="1">Arsenite-stimulated ATPase</fullName>
    </alternativeName>
    <alternativeName>
        <fullName evidence="1">Golgi to ER traffic protein 3</fullName>
    </alternativeName>
    <alternativeName>
        <fullName evidence="1">Guided entry of tail-anchored proteins 3</fullName>
    </alternativeName>
</protein>